<accession>Q668Z3</accession>
<sequence>MDMTNAQRLILSNQYKMMTMLDPENAERYRRQQTIVERGFGLQMRELDRDFGEMSEDTCRTIINIMEMHHALQVSWGNLKEKQDLDERRISFLGFDAATESRYLSYVRFMVNTEGRYTHFDSGTHGFNSQTPMWDKYQRMLAIWQSCPRQYHLSAVEISQIINA</sequence>
<dbReference type="EMBL" id="BX936398">
    <property type="protein sequence ID" value="CAH21832.1"/>
    <property type="molecule type" value="Genomic_DNA"/>
</dbReference>
<dbReference type="RefSeq" id="WP_002210286.1">
    <property type="nucleotide sequence ID" value="NZ_CP009712.1"/>
</dbReference>
<dbReference type="SMR" id="Q668Z3"/>
<dbReference type="KEGG" id="ypo:BZ17_4044"/>
<dbReference type="KEGG" id="yps:YPTB2594"/>
<dbReference type="PATRIC" id="fig|273123.14.peg.4247"/>
<dbReference type="Proteomes" id="UP000001011">
    <property type="component" value="Chromosome"/>
</dbReference>
<dbReference type="Gene3D" id="1.10.287.680">
    <property type="entry name" value="Helix hairpin bin"/>
    <property type="match status" value="1"/>
</dbReference>
<dbReference type="Gene3D" id="1.10.3190.10">
    <property type="entry name" value="yfbu gene product, domain 2"/>
    <property type="match status" value="1"/>
</dbReference>
<dbReference type="HAMAP" id="MF_00762">
    <property type="entry name" value="UPF0304"/>
    <property type="match status" value="1"/>
</dbReference>
<dbReference type="InterPro" id="IPR005587">
    <property type="entry name" value="UPF0304_YfbU"/>
</dbReference>
<dbReference type="InterPro" id="IPR023146">
    <property type="entry name" value="YfbU_alpha-helical_sf"/>
</dbReference>
<dbReference type="InterPro" id="IPR023145">
    <property type="entry name" value="YfbU_helix-hairpin_sf"/>
</dbReference>
<dbReference type="NCBIfam" id="NF003936">
    <property type="entry name" value="PRK05445.1"/>
    <property type="match status" value="1"/>
</dbReference>
<dbReference type="Pfam" id="PF03887">
    <property type="entry name" value="YfbU"/>
    <property type="match status" value="1"/>
</dbReference>
<dbReference type="PIRSF" id="PIRSF006272">
    <property type="entry name" value="UCP006272"/>
    <property type="match status" value="1"/>
</dbReference>
<dbReference type="SUPFAM" id="SSF116960">
    <property type="entry name" value="YfbU-like"/>
    <property type="match status" value="1"/>
</dbReference>
<comment type="similarity">
    <text evidence="1">Belongs to the UPF0304 family.</text>
</comment>
<feature type="chain" id="PRO_0000218175" description="UPF0304 protein YPTB2594">
    <location>
        <begin position="1"/>
        <end position="164"/>
    </location>
</feature>
<reference key="1">
    <citation type="journal article" date="2004" name="Proc. Natl. Acad. Sci. U.S.A.">
        <title>Insights into the evolution of Yersinia pestis through whole-genome comparison with Yersinia pseudotuberculosis.</title>
        <authorList>
            <person name="Chain P.S.G."/>
            <person name="Carniel E."/>
            <person name="Larimer F.W."/>
            <person name="Lamerdin J."/>
            <person name="Stoutland P.O."/>
            <person name="Regala W.M."/>
            <person name="Georgescu A.M."/>
            <person name="Vergez L.M."/>
            <person name="Land M.L."/>
            <person name="Motin V.L."/>
            <person name="Brubaker R.R."/>
            <person name="Fowler J."/>
            <person name="Hinnebusch J."/>
            <person name="Marceau M."/>
            <person name="Medigue C."/>
            <person name="Simonet M."/>
            <person name="Chenal-Francisque V."/>
            <person name="Souza B."/>
            <person name="Dacheux D."/>
            <person name="Elliott J.M."/>
            <person name="Derbise A."/>
            <person name="Hauser L.J."/>
            <person name="Garcia E."/>
        </authorList>
    </citation>
    <scope>NUCLEOTIDE SEQUENCE [LARGE SCALE GENOMIC DNA]</scope>
    <source>
        <strain>IP32953</strain>
    </source>
</reference>
<gene>
    <name type="ordered locus">YPTB2594</name>
</gene>
<evidence type="ECO:0000255" key="1">
    <source>
        <dbReference type="HAMAP-Rule" id="MF_00762"/>
    </source>
</evidence>
<name>Y2594_YERPS</name>
<protein>
    <recommendedName>
        <fullName evidence="1">UPF0304 protein YPTB2594</fullName>
    </recommendedName>
</protein>
<proteinExistence type="inferred from homology"/>
<organism>
    <name type="scientific">Yersinia pseudotuberculosis serotype I (strain IP32953)</name>
    <dbReference type="NCBI Taxonomy" id="273123"/>
    <lineage>
        <taxon>Bacteria</taxon>
        <taxon>Pseudomonadati</taxon>
        <taxon>Pseudomonadota</taxon>
        <taxon>Gammaproteobacteria</taxon>
        <taxon>Enterobacterales</taxon>
        <taxon>Yersiniaceae</taxon>
        <taxon>Yersinia</taxon>
    </lineage>
</organism>